<proteinExistence type="inferred from homology"/>
<name>CLPB_XANCP</name>
<feature type="chain" id="PRO_0000191207" description="Chaperone protein ClpB">
    <location>
        <begin position="1"/>
        <end position="861"/>
    </location>
</feature>
<feature type="domain" description="Clp R" evidence="2">
    <location>
        <begin position="3"/>
        <end position="146"/>
    </location>
</feature>
<feature type="region of interest" description="Repeat 1" evidence="2">
    <location>
        <begin position="6"/>
        <end position="71"/>
    </location>
</feature>
<feature type="region of interest" description="Repeat 2" evidence="2">
    <location>
        <begin position="83"/>
        <end position="146"/>
    </location>
</feature>
<feature type="region of interest" description="NBD1" evidence="1">
    <location>
        <begin position="159"/>
        <end position="340"/>
    </location>
</feature>
<feature type="region of interest" description="Linker" evidence="1">
    <location>
        <begin position="341"/>
        <end position="545"/>
    </location>
</feature>
<feature type="region of interest" description="NBD2" evidence="1">
    <location>
        <begin position="555"/>
        <end position="768"/>
    </location>
</feature>
<feature type="region of interest" description="C-terminal" evidence="1">
    <location>
        <begin position="769"/>
        <end position="861"/>
    </location>
</feature>
<feature type="coiled-coil region" evidence="1">
    <location>
        <begin position="391"/>
        <end position="523"/>
    </location>
</feature>
<feature type="binding site" evidence="1">
    <location>
        <begin position="206"/>
        <end position="213"/>
    </location>
    <ligand>
        <name>ATP</name>
        <dbReference type="ChEBI" id="CHEBI:30616"/>
        <label>1</label>
    </ligand>
</feature>
<feature type="binding site" evidence="1">
    <location>
        <begin position="605"/>
        <end position="612"/>
    </location>
    <ligand>
        <name>ATP</name>
        <dbReference type="ChEBI" id="CHEBI:30616"/>
        <label>2</label>
    </ligand>
</feature>
<keyword id="KW-0067">ATP-binding</keyword>
<keyword id="KW-0143">Chaperone</keyword>
<keyword id="KW-0175">Coiled coil</keyword>
<keyword id="KW-0963">Cytoplasm</keyword>
<keyword id="KW-0547">Nucleotide-binding</keyword>
<keyword id="KW-1185">Reference proteome</keyword>
<keyword id="KW-0677">Repeat</keyword>
<keyword id="KW-0346">Stress response</keyword>
<dbReference type="EMBL" id="AE008922">
    <property type="protein sequence ID" value="AAM42341.1"/>
    <property type="molecule type" value="Genomic_DNA"/>
</dbReference>
<dbReference type="RefSeq" id="NP_638417.1">
    <property type="nucleotide sequence ID" value="NC_003902.1"/>
</dbReference>
<dbReference type="RefSeq" id="WP_011038185.1">
    <property type="nucleotide sequence ID" value="NC_003902.1"/>
</dbReference>
<dbReference type="SMR" id="Q8P6A0"/>
<dbReference type="STRING" id="190485.XCC3070"/>
<dbReference type="EnsemblBacteria" id="AAM42341">
    <property type="protein sequence ID" value="AAM42341"/>
    <property type="gene ID" value="XCC3070"/>
</dbReference>
<dbReference type="KEGG" id="xcc:XCC3070"/>
<dbReference type="PATRIC" id="fig|190485.4.peg.3279"/>
<dbReference type="eggNOG" id="COG0542">
    <property type="taxonomic scope" value="Bacteria"/>
</dbReference>
<dbReference type="HOGENOM" id="CLU_005070_4_0_6"/>
<dbReference type="OrthoDB" id="9803641at2"/>
<dbReference type="Proteomes" id="UP000001010">
    <property type="component" value="Chromosome"/>
</dbReference>
<dbReference type="GO" id="GO:0005737">
    <property type="term" value="C:cytoplasm"/>
    <property type="evidence" value="ECO:0000318"/>
    <property type="project" value="GO_Central"/>
</dbReference>
<dbReference type="GO" id="GO:0005524">
    <property type="term" value="F:ATP binding"/>
    <property type="evidence" value="ECO:0007669"/>
    <property type="project" value="UniProtKB-KW"/>
</dbReference>
<dbReference type="GO" id="GO:0016887">
    <property type="term" value="F:ATP hydrolysis activity"/>
    <property type="evidence" value="ECO:0000318"/>
    <property type="project" value="GO_Central"/>
</dbReference>
<dbReference type="GO" id="GO:0034605">
    <property type="term" value="P:cellular response to heat"/>
    <property type="evidence" value="ECO:0000318"/>
    <property type="project" value="GO_Central"/>
</dbReference>
<dbReference type="GO" id="GO:0042026">
    <property type="term" value="P:protein refolding"/>
    <property type="evidence" value="ECO:0007669"/>
    <property type="project" value="InterPro"/>
</dbReference>
<dbReference type="CDD" id="cd00009">
    <property type="entry name" value="AAA"/>
    <property type="match status" value="1"/>
</dbReference>
<dbReference type="CDD" id="cd19499">
    <property type="entry name" value="RecA-like_ClpB_Hsp104-like"/>
    <property type="match status" value="1"/>
</dbReference>
<dbReference type="FunFam" id="1.10.1780.10:FF:000003">
    <property type="entry name" value="ATP-dependent chaperone ClpB"/>
    <property type="match status" value="1"/>
</dbReference>
<dbReference type="FunFam" id="1.10.8.60:FF:000017">
    <property type="entry name" value="ATP-dependent chaperone ClpB"/>
    <property type="match status" value="1"/>
</dbReference>
<dbReference type="FunFam" id="3.40.50.300:FF:000120">
    <property type="entry name" value="ATP-dependent chaperone ClpB"/>
    <property type="match status" value="1"/>
</dbReference>
<dbReference type="FunFam" id="3.40.50.300:FF:000025">
    <property type="entry name" value="ATP-dependent Clp protease subunit"/>
    <property type="match status" value="1"/>
</dbReference>
<dbReference type="FunFam" id="3.40.50.300:FF:000010">
    <property type="entry name" value="Chaperone clpB 1, putative"/>
    <property type="match status" value="1"/>
</dbReference>
<dbReference type="Gene3D" id="1.10.8.60">
    <property type="match status" value="1"/>
</dbReference>
<dbReference type="Gene3D" id="1.10.1780.10">
    <property type="entry name" value="Clp, N-terminal domain"/>
    <property type="match status" value="1"/>
</dbReference>
<dbReference type="Gene3D" id="3.40.50.300">
    <property type="entry name" value="P-loop containing nucleotide triphosphate hydrolases"/>
    <property type="match status" value="3"/>
</dbReference>
<dbReference type="InterPro" id="IPR003593">
    <property type="entry name" value="AAA+_ATPase"/>
</dbReference>
<dbReference type="InterPro" id="IPR003959">
    <property type="entry name" value="ATPase_AAA_core"/>
</dbReference>
<dbReference type="InterPro" id="IPR017730">
    <property type="entry name" value="Chaperonin_ClpB"/>
</dbReference>
<dbReference type="InterPro" id="IPR019489">
    <property type="entry name" value="Clp_ATPase_C"/>
</dbReference>
<dbReference type="InterPro" id="IPR036628">
    <property type="entry name" value="Clp_N_dom_sf"/>
</dbReference>
<dbReference type="InterPro" id="IPR004176">
    <property type="entry name" value="Clp_R_dom"/>
</dbReference>
<dbReference type="InterPro" id="IPR001270">
    <property type="entry name" value="ClpA/B"/>
</dbReference>
<dbReference type="InterPro" id="IPR018368">
    <property type="entry name" value="ClpA/B_CS1"/>
</dbReference>
<dbReference type="InterPro" id="IPR028299">
    <property type="entry name" value="ClpA/B_CS2"/>
</dbReference>
<dbReference type="InterPro" id="IPR041546">
    <property type="entry name" value="ClpA/ClpB_AAA_lid"/>
</dbReference>
<dbReference type="InterPro" id="IPR050130">
    <property type="entry name" value="ClpA_ClpB"/>
</dbReference>
<dbReference type="InterPro" id="IPR027417">
    <property type="entry name" value="P-loop_NTPase"/>
</dbReference>
<dbReference type="NCBIfam" id="TIGR03346">
    <property type="entry name" value="chaperone_ClpB"/>
    <property type="match status" value="1"/>
</dbReference>
<dbReference type="NCBIfam" id="NF008118">
    <property type="entry name" value="PRK10865.1"/>
    <property type="match status" value="1"/>
</dbReference>
<dbReference type="PANTHER" id="PTHR11638">
    <property type="entry name" value="ATP-DEPENDENT CLP PROTEASE"/>
    <property type="match status" value="1"/>
</dbReference>
<dbReference type="PANTHER" id="PTHR11638:SF18">
    <property type="entry name" value="HEAT SHOCK PROTEIN 104"/>
    <property type="match status" value="1"/>
</dbReference>
<dbReference type="Pfam" id="PF00004">
    <property type="entry name" value="AAA"/>
    <property type="match status" value="1"/>
</dbReference>
<dbReference type="Pfam" id="PF07724">
    <property type="entry name" value="AAA_2"/>
    <property type="match status" value="1"/>
</dbReference>
<dbReference type="Pfam" id="PF17871">
    <property type="entry name" value="AAA_lid_9"/>
    <property type="match status" value="1"/>
</dbReference>
<dbReference type="Pfam" id="PF02861">
    <property type="entry name" value="Clp_N"/>
    <property type="match status" value="2"/>
</dbReference>
<dbReference type="Pfam" id="PF10431">
    <property type="entry name" value="ClpB_D2-small"/>
    <property type="match status" value="1"/>
</dbReference>
<dbReference type="PRINTS" id="PR00300">
    <property type="entry name" value="CLPPROTEASEA"/>
</dbReference>
<dbReference type="SMART" id="SM00382">
    <property type="entry name" value="AAA"/>
    <property type="match status" value="2"/>
</dbReference>
<dbReference type="SMART" id="SM01086">
    <property type="entry name" value="ClpB_D2-small"/>
    <property type="match status" value="1"/>
</dbReference>
<dbReference type="SUPFAM" id="SSF81923">
    <property type="entry name" value="Double Clp-N motif"/>
    <property type="match status" value="1"/>
</dbReference>
<dbReference type="SUPFAM" id="SSF52540">
    <property type="entry name" value="P-loop containing nucleoside triphosphate hydrolases"/>
    <property type="match status" value="2"/>
</dbReference>
<dbReference type="PROSITE" id="PS51903">
    <property type="entry name" value="CLP_R"/>
    <property type="match status" value="1"/>
</dbReference>
<dbReference type="PROSITE" id="PS00870">
    <property type="entry name" value="CLPAB_1"/>
    <property type="match status" value="1"/>
</dbReference>
<dbReference type="PROSITE" id="PS00871">
    <property type="entry name" value="CLPAB_2"/>
    <property type="match status" value="1"/>
</dbReference>
<comment type="function">
    <text evidence="1">Part of a stress-induced multi-chaperone system, it is involved in the recovery of the cell from heat-induced damage, in cooperation with DnaK, DnaJ and GrpE. Acts before DnaK, in the processing of protein aggregates. Protein binding stimulates the ATPase activity; ATP hydrolysis unfolds the denatured protein aggregates, which probably helps expose new hydrophobic binding sites on the surface of ClpB-bound aggregates, contributing to the solubilization and refolding of denatured protein aggregates by DnaK (By similarity).</text>
</comment>
<comment type="subunit">
    <text evidence="1">Homohexamer. The oligomerization is ATP-dependent (By similarity).</text>
</comment>
<comment type="subcellular location">
    <subcellularLocation>
        <location evidence="3">Cytoplasm</location>
    </subcellularLocation>
</comment>
<comment type="domain">
    <text evidence="1">The Clp repeat (R) domain probably functions as a substrate-discriminating domain, recruiting aggregated proteins to the ClpB hexamer and/or stabilizing bound proteins. The NBD2 domain is responsible for oligomerization, whereas the NBD1 domain stabilizes the hexamer probably in an ATP-dependent manner. The movement of the coiled-coil domain is essential for ClpB ability to rescue proteins from an aggregated state, probably by pulling apart large aggregated proteins, which are bound between the coiled-coils motifs of adjacent ClpB subunits in the functional hexamer (By similarity).</text>
</comment>
<comment type="similarity">
    <text evidence="3">Belongs to the ClpA/ClpB family.</text>
</comment>
<gene>
    <name type="primary">clpB</name>
    <name type="ordered locus">XCC3070</name>
</gene>
<organism>
    <name type="scientific">Xanthomonas campestris pv. campestris (strain ATCC 33913 / DSM 3586 / NCPPB 528 / LMG 568 / P 25)</name>
    <dbReference type="NCBI Taxonomy" id="190485"/>
    <lineage>
        <taxon>Bacteria</taxon>
        <taxon>Pseudomonadati</taxon>
        <taxon>Pseudomonadota</taxon>
        <taxon>Gammaproteobacteria</taxon>
        <taxon>Lysobacterales</taxon>
        <taxon>Lysobacteraceae</taxon>
        <taxon>Xanthomonas</taxon>
    </lineage>
</organism>
<reference key="1">
    <citation type="journal article" date="2002" name="Nature">
        <title>Comparison of the genomes of two Xanthomonas pathogens with differing host specificities.</title>
        <authorList>
            <person name="da Silva A.C.R."/>
            <person name="Ferro J.A."/>
            <person name="Reinach F.C."/>
            <person name="Farah C.S."/>
            <person name="Furlan L.R."/>
            <person name="Quaggio R.B."/>
            <person name="Monteiro-Vitorello C.B."/>
            <person name="Van Sluys M.A."/>
            <person name="Almeida N.F. Jr."/>
            <person name="Alves L.M.C."/>
            <person name="do Amaral A.M."/>
            <person name="Bertolini M.C."/>
            <person name="Camargo L.E.A."/>
            <person name="Camarotte G."/>
            <person name="Cannavan F."/>
            <person name="Cardozo J."/>
            <person name="Chambergo F."/>
            <person name="Ciapina L.P."/>
            <person name="Cicarelli R.M.B."/>
            <person name="Coutinho L.L."/>
            <person name="Cursino-Santos J.R."/>
            <person name="El-Dorry H."/>
            <person name="Faria J.B."/>
            <person name="Ferreira A.J.S."/>
            <person name="Ferreira R.C.C."/>
            <person name="Ferro M.I.T."/>
            <person name="Formighieri E.F."/>
            <person name="Franco M.C."/>
            <person name="Greggio C.C."/>
            <person name="Gruber A."/>
            <person name="Katsuyama A.M."/>
            <person name="Kishi L.T."/>
            <person name="Leite R.P."/>
            <person name="Lemos E.G.M."/>
            <person name="Lemos M.V.F."/>
            <person name="Locali E.C."/>
            <person name="Machado M.A."/>
            <person name="Madeira A.M.B.N."/>
            <person name="Martinez-Rossi N.M."/>
            <person name="Martins E.C."/>
            <person name="Meidanis J."/>
            <person name="Menck C.F.M."/>
            <person name="Miyaki C.Y."/>
            <person name="Moon D.H."/>
            <person name="Moreira L.M."/>
            <person name="Novo M.T.M."/>
            <person name="Okura V.K."/>
            <person name="Oliveira M.C."/>
            <person name="Oliveira V.R."/>
            <person name="Pereira H.A."/>
            <person name="Rossi A."/>
            <person name="Sena J.A.D."/>
            <person name="Silva C."/>
            <person name="de Souza R.F."/>
            <person name="Spinola L.A.F."/>
            <person name="Takita M.A."/>
            <person name="Tamura R.E."/>
            <person name="Teixeira E.C."/>
            <person name="Tezza R.I.D."/>
            <person name="Trindade dos Santos M."/>
            <person name="Truffi D."/>
            <person name="Tsai S.M."/>
            <person name="White F.F."/>
            <person name="Setubal J.C."/>
            <person name="Kitajima J.P."/>
        </authorList>
    </citation>
    <scope>NUCLEOTIDE SEQUENCE [LARGE SCALE GENOMIC DNA]</scope>
    <source>
        <strain>ATCC 33913 / DSM 3586 / NCPPB 528 / LMG 568 / P 25</strain>
    </source>
</reference>
<protein>
    <recommendedName>
        <fullName>Chaperone protein ClpB</fullName>
    </recommendedName>
</protein>
<sequence length="861" mass="95489">MRMDKLTSRFQQALADAQSLAVGRDHNIIEPVHVLAALLDQSGGSTRPLLSQSGVNVPALRERLGEALDTLPKVSGQEGNLSIGNDLNRLLNQTDKLAQQHGDAFIASEWFVLAAADDASPLGVALRAAGGDKKKIEAAIDKLRGGETVQSENAEEQRQALEKYTIDLTARAESGKLDPVIGRDEEIRRTIQVLQRRTKNNPVLIGEPGVGKTAIVEGLAQRIINGEVPEGLRGKRVLSLDMGALIAGAKFRGEFEERLKAVLSDLSKNEGQIILFIDELHTMVGAGKADGAMDAGNMLKPALARGELHCIGATTLDEYRKYIEKDAALERRFQKVFVGEPTVEDTIAILRGLKERYAVHHGVEITDPAIVAAATLSNRYITDRQLPDKAIDLMDEAASRIRMEIDSKPEELDRLERRLIQLKIQREMLKKEKDEASRQRLADLESDIDKLEREFSDLNEVWKSEKAALQGTTKIKEQIEHAKLELEAAQRRQDYAKMSEIQYGVLPQLEKQMLLANEVEHHDFKLVQDRVTAEEIAEVVSRWTGIPVNKMLEGERDKLLRMEDELHRRVVGQEEAIKVVSDAVRRSRAGLSDPNRPSGSFLFLGPTGVGKTELCKALADFLFDSTEAMIRIDMSEFMEKHSVSRLIGAPPGYVGYEEGGYLTEAVRRRPYSLILLDEVEKAHADVFNILLQVLDDGRLTDGQGRTVDFRNTVIVMTSNLGSHQIQELSGDGSAEAYTQMKAAVMGVVQAHFRPEFINRLDDIVVFHPLDKAQIKSIARIQLQGLEKRLAERGLKLDLDDPALELLGNVGFDPVYGARPLKRAIQSQVENPLAQQILSGQYTSGDTVRVRTEGGHLAFTKG</sequence>
<accession>Q8P6A0</accession>
<evidence type="ECO:0000250" key="1"/>
<evidence type="ECO:0000255" key="2">
    <source>
        <dbReference type="PROSITE-ProRule" id="PRU01251"/>
    </source>
</evidence>
<evidence type="ECO:0000305" key="3"/>